<gene>
    <name evidence="1" type="primary">smpB</name>
    <name type="ordered locus">PC1_0724</name>
</gene>
<feature type="chain" id="PRO_1000201938" description="SsrA-binding protein">
    <location>
        <begin position="1"/>
        <end position="160"/>
    </location>
</feature>
<protein>
    <recommendedName>
        <fullName evidence="1">SsrA-binding protein</fullName>
    </recommendedName>
    <alternativeName>
        <fullName evidence="1">Small protein B</fullName>
    </alternativeName>
</protein>
<dbReference type="EMBL" id="CP001657">
    <property type="protein sequence ID" value="ACT11778.1"/>
    <property type="molecule type" value="Genomic_DNA"/>
</dbReference>
<dbReference type="RefSeq" id="WP_012773422.1">
    <property type="nucleotide sequence ID" value="NC_012917.1"/>
</dbReference>
<dbReference type="SMR" id="C6D970"/>
<dbReference type="STRING" id="561230.PC1_0724"/>
<dbReference type="GeneID" id="67795458"/>
<dbReference type="KEGG" id="pct:PC1_0724"/>
<dbReference type="eggNOG" id="COG0691">
    <property type="taxonomic scope" value="Bacteria"/>
</dbReference>
<dbReference type="HOGENOM" id="CLU_108953_3_0_6"/>
<dbReference type="OrthoDB" id="9805462at2"/>
<dbReference type="Proteomes" id="UP000002736">
    <property type="component" value="Chromosome"/>
</dbReference>
<dbReference type="GO" id="GO:0005829">
    <property type="term" value="C:cytosol"/>
    <property type="evidence" value="ECO:0007669"/>
    <property type="project" value="TreeGrafter"/>
</dbReference>
<dbReference type="GO" id="GO:0003723">
    <property type="term" value="F:RNA binding"/>
    <property type="evidence" value="ECO:0007669"/>
    <property type="project" value="UniProtKB-UniRule"/>
</dbReference>
<dbReference type="GO" id="GO:0070929">
    <property type="term" value="P:trans-translation"/>
    <property type="evidence" value="ECO:0007669"/>
    <property type="project" value="UniProtKB-UniRule"/>
</dbReference>
<dbReference type="CDD" id="cd09294">
    <property type="entry name" value="SmpB"/>
    <property type="match status" value="1"/>
</dbReference>
<dbReference type="Gene3D" id="2.40.280.10">
    <property type="match status" value="1"/>
</dbReference>
<dbReference type="HAMAP" id="MF_00023">
    <property type="entry name" value="SmpB"/>
    <property type="match status" value="1"/>
</dbReference>
<dbReference type="InterPro" id="IPR023620">
    <property type="entry name" value="SmpB"/>
</dbReference>
<dbReference type="InterPro" id="IPR000037">
    <property type="entry name" value="SsrA-bd_prot"/>
</dbReference>
<dbReference type="InterPro" id="IPR020081">
    <property type="entry name" value="SsrA-bd_prot_CS"/>
</dbReference>
<dbReference type="NCBIfam" id="NF003843">
    <property type="entry name" value="PRK05422.1"/>
    <property type="match status" value="1"/>
</dbReference>
<dbReference type="NCBIfam" id="TIGR00086">
    <property type="entry name" value="smpB"/>
    <property type="match status" value="1"/>
</dbReference>
<dbReference type="PANTHER" id="PTHR30308:SF2">
    <property type="entry name" value="SSRA-BINDING PROTEIN"/>
    <property type="match status" value="1"/>
</dbReference>
<dbReference type="PANTHER" id="PTHR30308">
    <property type="entry name" value="TMRNA-BINDING COMPONENT OF TRANS-TRANSLATION TAGGING COMPLEX"/>
    <property type="match status" value="1"/>
</dbReference>
<dbReference type="Pfam" id="PF01668">
    <property type="entry name" value="SmpB"/>
    <property type="match status" value="1"/>
</dbReference>
<dbReference type="SUPFAM" id="SSF74982">
    <property type="entry name" value="Small protein B (SmpB)"/>
    <property type="match status" value="1"/>
</dbReference>
<dbReference type="PROSITE" id="PS01317">
    <property type="entry name" value="SSRP"/>
    <property type="match status" value="1"/>
</dbReference>
<organism>
    <name type="scientific">Pectobacterium carotovorum subsp. carotovorum (strain PC1)</name>
    <dbReference type="NCBI Taxonomy" id="561230"/>
    <lineage>
        <taxon>Bacteria</taxon>
        <taxon>Pseudomonadati</taxon>
        <taxon>Pseudomonadota</taxon>
        <taxon>Gammaproteobacteria</taxon>
        <taxon>Enterobacterales</taxon>
        <taxon>Pectobacteriaceae</taxon>
        <taxon>Pectobacterium</taxon>
    </lineage>
</organism>
<comment type="function">
    <text evidence="1">Required for rescue of stalled ribosomes mediated by trans-translation. Binds to transfer-messenger RNA (tmRNA), required for stable association of tmRNA with ribosomes. tmRNA and SmpB together mimic tRNA shape, replacing the anticodon stem-loop with SmpB. tmRNA is encoded by the ssrA gene; the 2 termini fold to resemble tRNA(Ala) and it encodes a 'tag peptide', a short internal open reading frame. During trans-translation Ala-aminoacylated tmRNA acts like a tRNA, entering the A-site of stalled ribosomes, displacing the stalled mRNA. The ribosome then switches to translate the ORF on the tmRNA; the nascent peptide is terminated with the 'tag peptide' encoded by the tmRNA and targeted for degradation. The ribosome is freed to recommence translation, which seems to be the essential function of trans-translation.</text>
</comment>
<comment type="subcellular location">
    <subcellularLocation>
        <location evidence="1">Cytoplasm</location>
    </subcellularLocation>
    <text evidence="1">The tmRNA-SmpB complex associates with stalled 70S ribosomes.</text>
</comment>
<comment type="similarity">
    <text evidence="1">Belongs to the SmpB family.</text>
</comment>
<reference key="1">
    <citation type="submission" date="2009-07" db="EMBL/GenBank/DDBJ databases">
        <title>Complete sequence of Pectobacterium carotovorum subsp. carotovorum PC1.</title>
        <authorList>
            <consortium name="US DOE Joint Genome Institute"/>
            <person name="Lucas S."/>
            <person name="Copeland A."/>
            <person name="Lapidus A."/>
            <person name="Glavina del Rio T."/>
            <person name="Tice H."/>
            <person name="Bruce D."/>
            <person name="Goodwin L."/>
            <person name="Pitluck S."/>
            <person name="Munk A.C."/>
            <person name="Brettin T."/>
            <person name="Detter J.C."/>
            <person name="Han C."/>
            <person name="Tapia R."/>
            <person name="Larimer F."/>
            <person name="Land M."/>
            <person name="Hauser L."/>
            <person name="Kyrpides N."/>
            <person name="Mikhailova N."/>
            <person name="Balakrishnan V."/>
            <person name="Glasner J."/>
            <person name="Perna N.T."/>
        </authorList>
    </citation>
    <scope>NUCLEOTIDE SEQUENCE [LARGE SCALE GENOMIC DNA]</scope>
    <source>
        <strain>PC1</strain>
    </source>
</reference>
<keyword id="KW-0963">Cytoplasm</keyword>
<keyword id="KW-0694">RNA-binding</keyword>
<evidence type="ECO:0000255" key="1">
    <source>
        <dbReference type="HAMAP-Rule" id="MF_00023"/>
    </source>
</evidence>
<name>SSRP_PECCP</name>
<proteinExistence type="inferred from homology"/>
<accession>C6D970</accession>
<sequence>MTKKKAYKPGSATIAQNKRARHEYFIEEEFEAGLALQGWEVKSLRAGKANLSDSYVTFMNGEAYLFGATITPLNVASSHVVCDPIRTRKLLLNKRELESLFGRVSREGYTVVALSMYWKNAWSKVKIGVAKGKKDHDKRDDIKEREWKLDKARIMKNANR</sequence>